<accession>P0DMB6</accession>
<evidence type="ECO:0000250" key="1"/>
<evidence type="ECO:0000269" key="2">
    <source>
    </source>
</evidence>
<evidence type="ECO:0000303" key="3">
    <source>
    </source>
</evidence>
<evidence type="ECO:0000305" key="4"/>
<evidence type="ECO:0000305" key="5">
    <source>
    </source>
</evidence>
<sequence>GLLPKVKLVPEQISFILSTRENR</sequence>
<proteinExistence type="evidence at protein level"/>
<feature type="chain" id="PRO_0000425196" description="Phospholipase A1 verutoxin-1" evidence="2">
    <location>
        <begin position="1"/>
        <end position="23" status="greater than"/>
    </location>
</feature>
<feature type="non-terminal residue">
    <location>
        <position position="23"/>
    </location>
</feature>
<dbReference type="EC" id="3.1.1.32" evidence="2"/>
<dbReference type="EC" id="3.1.1.5" evidence="2"/>
<dbReference type="SwissLipids" id="SLP:000001928"/>
<dbReference type="GO" id="GO:0005576">
    <property type="term" value="C:extracellular region"/>
    <property type="evidence" value="ECO:0007669"/>
    <property type="project" value="UniProtKB-SubCell"/>
</dbReference>
<dbReference type="GO" id="GO:0004622">
    <property type="term" value="F:lysophospholipase activity"/>
    <property type="evidence" value="ECO:0007669"/>
    <property type="project" value="RHEA"/>
</dbReference>
<dbReference type="GO" id="GO:0008970">
    <property type="term" value="F:phospholipase A1 activity"/>
    <property type="evidence" value="ECO:0007669"/>
    <property type="project" value="UniProtKB-EC"/>
</dbReference>
<dbReference type="GO" id="GO:0031640">
    <property type="term" value="P:killing of cells of another organism"/>
    <property type="evidence" value="ECO:0007669"/>
    <property type="project" value="UniProtKB-KW"/>
</dbReference>
<dbReference type="GO" id="GO:0016042">
    <property type="term" value="P:lipid catabolic process"/>
    <property type="evidence" value="ECO:0007669"/>
    <property type="project" value="UniProtKB-KW"/>
</dbReference>
<name>PA11_VESVE</name>
<keyword id="KW-0020">Allergen</keyword>
<keyword id="KW-0204">Cytolysis</keyword>
<keyword id="KW-0903">Direct protein sequencing</keyword>
<keyword id="KW-1015">Disulfide bond</keyword>
<keyword id="KW-0354">Hemolysis</keyword>
<keyword id="KW-0378">Hydrolase</keyword>
<keyword id="KW-0442">Lipid degradation</keyword>
<keyword id="KW-0443">Lipid metabolism</keyword>
<keyword id="KW-0964">Secreted</keyword>
<protein>
    <recommendedName>
        <fullName evidence="3">Phospholipase A1 verutoxin-1</fullName>
        <shortName evidence="4">PLA1</shortName>
        <shortName evidence="3">VT-1</shortName>
        <ecNumber evidence="2">3.1.1.32</ecNumber>
        <ecNumber evidence="2">3.1.1.5</ecNumber>
    </recommendedName>
</protein>
<comment type="function">
    <text evidence="2">Catalyzes the hydrolysis of glycerophospholipids such as phosphatidylcholine (1,2-diacyl-sn-glycero-3-phosphocholine) and has a moderate activity to hydrolyze lysoglycerophospholipids such as lysophosphatidylcholine (1-acyl-sn-glycero-3-phosphocholine), but is unable to hydrolyze sphingomyelin. Liberates the fatty acid from the sn-1 position of 1,2-diacyl-sn-glycero-3-phosphocholine mainly, indicating phospholipase activity of the A1 type. In addition to acting as an allergen, it possesses a moderate hemolytic activity on red blood cells of mice (3% of hemolysis at 3.0 ug/ml).</text>
</comment>
<comment type="catalytic activity">
    <reaction evidence="2">
        <text>a 1,2-diacyl-sn-glycero-3-phosphocholine + H2O = a 2-acyl-sn-glycero-3-phosphocholine + a fatty acid + H(+)</text>
        <dbReference type="Rhea" id="RHEA:18689"/>
        <dbReference type="ChEBI" id="CHEBI:15377"/>
        <dbReference type="ChEBI" id="CHEBI:15378"/>
        <dbReference type="ChEBI" id="CHEBI:28868"/>
        <dbReference type="ChEBI" id="CHEBI:57643"/>
        <dbReference type="ChEBI" id="CHEBI:57875"/>
        <dbReference type="EC" id="3.1.1.32"/>
    </reaction>
    <physiologicalReaction direction="left-to-right" evidence="2">
        <dbReference type="Rhea" id="RHEA:18690"/>
    </physiologicalReaction>
</comment>
<comment type="catalytic activity">
    <reaction evidence="2">
        <text>1-(9Z-octadecenoyl)-2-hexadecanoyl-sn-glycero-3-phosphocholine + H2O = 2-hexadecanoyl-sn-glycero-3-phosphocholine + (9Z)-octadecenoate + H(+)</text>
        <dbReference type="Rhea" id="RHEA:38787"/>
        <dbReference type="ChEBI" id="CHEBI:15377"/>
        <dbReference type="ChEBI" id="CHEBI:15378"/>
        <dbReference type="ChEBI" id="CHEBI:30823"/>
        <dbReference type="ChEBI" id="CHEBI:74667"/>
        <dbReference type="ChEBI" id="CHEBI:76078"/>
    </reaction>
    <physiologicalReaction direction="left-to-right" evidence="2">
        <dbReference type="Rhea" id="RHEA:38788"/>
    </physiologicalReaction>
</comment>
<comment type="catalytic activity">
    <reaction evidence="2">
        <text>a 1-acyl-sn-glycero-3-phosphocholine + H2O = sn-glycerol 3-phosphocholine + a fatty acid + H(+)</text>
        <dbReference type="Rhea" id="RHEA:15177"/>
        <dbReference type="ChEBI" id="CHEBI:15377"/>
        <dbReference type="ChEBI" id="CHEBI:15378"/>
        <dbReference type="ChEBI" id="CHEBI:16870"/>
        <dbReference type="ChEBI" id="CHEBI:28868"/>
        <dbReference type="ChEBI" id="CHEBI:58168"/>
        <dbReference type="EC" id="3.1.1.5"/>
    </reaction>
    <physiologicalReaction direction="left-to-right" evidence="2">
        <dbReference type="Rhea" id="RHEA:15178"/>
    </physiologicalReaction>
</comment>
<comment type="activity regulation">
    <text evidence="2">Activity is maximal in the presence of calcium. However, unlike phospholipases A2 whose catalytic activity is strictly calcium-dependent, this enzyme shows considerable catalytic activity on phosphatidylcholine emulsified in calcium free solution; the catalytic activity of VT-1 assayed in the absence of calcium ions is 18-20% of that assayed in solution containing calcium ions.</text>
</comment>
<comment type="pathway">
    <text evidence="5">Phospholipid metabolism.</text>
</comment>
<comment type="subcellular location">
    <subcellularLocation>
        <location evidence="2">Secreted</location>
    </subcellularLocation>
</comment>
<comment type="tissue specificity">
    <text evidence="5">Expressed by the venom gland.</text>
</comment>
<comment type="PTM">
    <text evidence="1">Contains six disulfide bonds.</text>
</comment>
<comment type="mass spectrometry"/>
<comment type="allergen">
    <text evidence="5">Causes an allergic reaction in human.</text>
</comment>
<comment type="toxic dose">
    <text evidence="2">LD(50) is 3.61 mg/kg by intravenous injection into mice (tail vein).</text>
</comment>
<comment type="miscellaneous">
    <text evidence="5">Is about 7.7% of the total proteins in the venom.</text>
</comment>
<comment type="similarity">
    <text evidence="4">Belongs to the AB hydrolase superfamily. Lipase family.</text>
</comment>
<comment type="caution">
    <text evidence="4">PubMed:10484737 describes this protein as produced by V.verutina. It is very probable that this species is a misspelled form of V.velutina.</text>
</comment>
<organism>
    <name type="scientific">Vespa velutina</name>
    <name type="common">Asian yellow-legged hornet</name>
    <dbReference type="NCBI Taxonomy" id="202808"/>
    <lineage>
        <taxon>Eukaryota</taxon>
        <taxon>Metazoa</taxon>
        <taxon>Ecdysozoa</taxon>
        <taxon>Arthropoda</taxon>
        <taxon>Hexapoda</taxon>
        <taxon>Insecta</taxon>
        <taxon>Pterygota</taxon>
        <taxon>Neoptera</taxon>
        <taxon>Endopterygota</taxon>
        <taxon>Hymenoptera</taxon>
        <taxon>Apocrita</taxon>
        <taxon>Aculeata</taxon>
        <taxon>Vespoidea</taxon>
        <taxon>Vespidae</taxon>
        <taxon>Vespinae</taxon>
        <taxon>Vespa</taxon>
    </lineage>
</organism>
<reference key="1">
    <citation type="journal article" date="1999" name="Toxicon">
        <title>Three toxins with phospholipase activity isolated from the yellow-legged hornet (Vespa verutina) venom.</title>
        <authorList>
            <person name="Ho C.L."/>
            <person name="Lin Y.L."/>
            <person name="Li S.F."/>
        </authorList>
    </citation>
    <scope>PROTEIN SEQUENCE</scope>
    <scope>FUNCTION</scope>
    <scope>CATALYTIC ACTIVITY</scope>
    <scope>ACTIVITY REGULATION</scope>
    <scope>TOXIC DOSE</scope>
    <scope>MASS SPECTROMETRY</scope>
    <scope>SUBCELLULAR LOCATION</scope>
    <source>
        <tissue>Venom</tissue>
    </source>
</reference>